<dbReference type="PIR" id="A01776">
    <property type="entry name" value="QMWAVV"/>
</dbReference>
<dbReference type="PDB" id="1D7N">
    <property type="method" value="NMR"/>
    <property type="chains" value="A=1-14"/>
</dbReference>
<dbReference type="PDB" id="6DUL">
    <property type="method" value="NMR"/>
    <property type="chains" value="A=1-14"/>
</dbReference>
<dbReference type="PDB" id="6DUU">
    <property type="method" value="NMR"/>
    <property type="chains" value="A=1-14"/>
</dbReference>
<dbReference type="PDB" id="7RUL">
    <property type="method" value="NMR"/>
    <property type="chains" value="A=1-14"/>
</dbReference>
<dbReference type="PDB" id="8EP5">
    <property type="method" value="NMR"/>
    <property type="chains" value="B=1-14"/>
</dbReference>
<dbReference type="PDBsum" id="1D7N"/>
<dbReference type="PDBsum" id="6DUL"/>
<dbReference type="PDBsum" id="6DUU"/>
<dbReference type="PDBsum" id="7RUL"/>
<dbReference type="PDBsum" id="8EP5"/>
<dbReference type="BMRB" id="P01514"/>
<dbReference type="SMR" id="P01514"/>
<dbReference type="TCDB" id="1.C.32.1.6">
    <property type="family name" value="the amphipathic peptide mastoparan (mastoparan) family"/>
</dbReference>
<dbReference type="EvolutionaryTrace" id="P01514"/>
<dbReference type="GO" id="GO:0005576">
    <property type="term" value="C:extracellular region"/>
    <property type="evidence" value="ECO:0007669"/>
    <property type="project" value="UniProtKB-SubCell"/>
</dbReference>
<dbReference type="GO" id="GO:0016020">
    <property type="term" value="C:membrane"/>
    <property type="evidence" value="ECO:0007669"/>
    <property type="project" value="UniProtKB-KW"/>
</dbReference>
<dbReference type="GO" id="GO:0044218">
    <property type="term" value="C:other organism cell membrane"/>
    <property type="evidence" value="ECO:0007669"/>
    <property type="project" value="UniProtKB-KW"/>
</dbReference>
<dbReference type="GO" id="GO:0090729">
    <property type="term" value="F:toxin activity"/>
    <property type="evidence" value="ECO:0007669"/>
    <property type="project" value="UniProtKB-KW"/>
</dbReference>
<dbReference type="GO" id="GO:0042742">
    <property type="term" value="P:defense response to bacterium"/>
    <property type="evidence" value="ECO:0007669"/>
    <property type="project" value="UniProtKB-KW"/>
</dbReference>
<dbReference type="GO" id="GO:0050832">
    <property type="term" value="P:defense response to fungus"/>
    <property type="evidence" value="ECO:0007669"/>
    <property type="project" value="UniProtKB-KW"/>
</dbReference>
<dbReference type="GO" id="GO:0045087">
    <property type="term" value="P:innate immune response"/>
    <property type="evidence" value="ECO:0007669"/>
    <property type="project" value="UniProtKB-KW"/>
</dbReference>
<dbReference type="GO" id="GO:0031640">
    <property type="term" value="P:killing of cells of another organism"/>
    <property type="evidence" value="ECO:0007669"/>
    <property type="project" value="UniProtKB-KW"/>
</dbReference>
<dbReference type="InterPro" id="IPR013213">
    <property type="entry name" value="Mastoparan"/>
</dbReference>
<dbReference type="Pfam" id="PF08249">
    <property type="entry name" value="Mastoparan"/>
    <property type="match status" value="1"/>
</dbReference>
<reference key="1">
    <citation type="journal article" date="1979" name="Chem. Pharm. Bull.">
        <title>A new mast cell degranulating peptide 'mastoparan' in the venom of Vespula lewisii.</title>
        <authorList>
            <person name="Hirai Y."/>
            <person name="Yasuhara T."/>
            <person name="Yoshida H."/>
            <person name="Nakajima T."/>
            <person name="Fujino M."/>
            <person name="Kitada C."/>
        </authorList>
    </citation>
    <scope>PROTEIN SEQUENCE</scope>
    <scope>FUNCTION</scope>
    <scope>AMIDATION AT LEU-14</scope>
    <scope>SYNTHESIS</scope>
    <scope>SUBCELLULAR LOCATION</scope>
    <source>
        <tissue>Venom</tissue>
    </source>
</reference>
<reference key="2">
    <citation type="journal article" date="1988" name="J. Biol. Chem.">
        <title>Mastoparan, a peptide toxin from wasp venom, mimics receptors by activating GTP-binding regulatory proteins (G proteins).</title>
        <authorList>
            <person name="Higashijima T."/>
            <person name="Uzu S."/>
            <person name="Nakajima T."/>
            <person name="Ross E.M."/>
        </authorList>
    </citation>
    <scope>FUNCTION</scope>
    <scope>SYNTHESIS</scope>
</reference>
<reference key="3">
    <citation type="journal article" date="1990" name="J. Biol. Chem.">
        <title>Regulation of Gi and Go by mastoparan, related amphiphilic peptides, and hydrophobic amines. Mechanism and structural determinants of activity.</title>
        <authorList>
            <person name="Higashijima T."/>
            <person name="Burnier J."/>
            <person name="Ross E.M."/>
        </authorList>
    </citation>
    <scope>FUNCTION</scope>
    <scope>MUTAGENESIS OF LEU-6; 12-LYS-ILE-13 AND ILE-13</scope>
</reference>
<reference key="4">
    <citation type="journal article" date="1992" name="FEBS Lett.">
        <title>Activation of nucleoside diphosphate kinase by mastoparan, a peptide isolated from wasp venom.</title>
        <authorList>
            <person name="Kikkawa S."/>
            <person name="Takahashi K."/>
            <person name="Takahashi K."/>
            <person name="Shimada N."/>
            <person name="Ui M."/>
            <person name="Kimura N."/>
            <person name="Katada T."/>
        </authorList>
    </citation>
    <scope>FUNCTION</scope>
</reference>
<reference key="5">
    <citation type="journal article" date="1994" name="Biochem. J.">
        <title>Mastoparan may activate GTP hydrolysis by Gi-proteins in HL-60 membranes indirectly through interaction with nucleoside diphosphate kinase.</title>
        <authorList>
            <person name="Klinker J.F."/>
            <person name="Hagelueken A."/>
            <person name="Gruenbaum L."/>
            <person name="Heilmann I."/>
            <person name="Nuernberg B."/>
            <person name="Harhammer R."/>
            <person name="Offermanns S."/>
            <person name="Schwaner I."/>
            <person name="Ervens J."/>
            <person name="Wenzel-Seifert K."/>
        </authorList>
    </citation>
    <scope>FUNCTION</scope>
</reference>
<reference key="6">
    <citation type="journal article" date="1996" name="Biochem. Pharmacol.">
        <title>Activation of GTP formation and high-affinity GTP hydrolysis by mastoparan in various cell membranes. G-protein activation via nucleoside diphosphate kinase, a possible general mechanism of mastoparan action.</title>
        <authorList>
            <person name="Klinker J.F."/>
            <person name="Laugwitz K.L."/>
            <person name="Hagelueken A."/>
            <person name="Seifert R."/>
        </authorList>
    </citation>
    <scope>FUNCTION</scope>
</reference>
<reference key="7">
    <citation type="journal article" date="2011" name="Peptides">
        <title>Venom peptides from solitary hunting wasps induce feeding disorder in lepidopteran larvae.</title>
        <authorList>
            <person name="Baek J.H."/>
            <person name="Ji Y."/>
            <person name="Shin J.S."/>
            <person name="Lee S."/>
            <person name="Lee S.H."/>
        </authorList>
    </citation>
    <scope>FUNCTION</scope>
    <scope>BIOASSAY</scope>
    <scope>SYNTHESIS OF 57-68</scope>
</reference>
<reference key="8">
    <citation type="journal article" date="2013" name="Peptides">
        <title>A mastoparan-derived peptide has broad-spectrum antiviral activity against enveloped viruses.</title>
        <authorList>
            <person name="Sample C.J."/>
            <person name="Hudak K.E."/>
            <person name="Barefoot B.E."/>
            <person name="Koci M.D."/>
            <person name="Wanyonyi M.S."/>
            <person name="Abraham S."/>
            <person name="Staats H.F."/>
            <person name="Ramsburg E.A."/>
        </authorList>
    </citation>
    <scope>BIOTECHNOLOGY</scope>
    <scope>MUTAGENESIS OF 12-LYS-ILE-13</scope>
</reference>
<reference key="9">
    <citation type="journal article" date="2016" name="Molecules">
        <title>MP-V1 from the venom of social wasp vespula vulgaris is a de novo type of mastoparan that displays superior antimicrobial activities.</title>
        <authorList>
            <person name="Kim Y."/>
            <person name="Son M."/>
            <person name="Noh E.Y."/>
            <person name="Kim S."/>
            <person name="Kim C."/>
            <person name="Yeo J.H."/>
            <person name="Park C."/>
            <person name="Lee K.W."/>
            <person name="Bang W.Y."/>
        </authorList>
    </citation>
    <scope>FUNCTION</scope>
    <scope>SYNTHESIS</scope>
    <scope>SUBCELLULAR LOCATION</scope>
</reference>
<reference key="10">
    <citation type="journal article" date="2019" name="Sci. Adv.">
        <title>MRGPR-mediated activation of local mast cells clears cutaneous bacterial infection and protects against reinfection.</title>
        <authorList>
            <person name="Arifuzzaman M."/>
            <person name="Mobley Y.R."/>
            <person name="Choi H.W."/>
            <person name="Bist P."/>
            <person name="Salinas C.A."/>
            <person name="Brown Z.D."/>
            <person name="Chen S.L."/>
            <person name="Staats H.F."/>
            <person name="Abraham S.N."/>
        </authorList>
    </citation>
    <scope>FUNCTION</scope>
    <scope>MUTAGENESIS OF LEU-6 AND ILE-13</scope>
</reference>
<reference key="11">
    <citation type="journal article" date="2020" name="Neuropeptides">
        <title>Involvement of the gabaergic, serotonergic and glucocorticoid mechanism in the anxiolytic-like effect of mastoparan-L.</title>
        <authorList>
            <person name="Silva O.N."/>
            <person name="Franco O.L."/>
            <person name="Neves B.J."/>
            <person name="Morais A.C.B."/>
            <person name="De Oliveira Neto J.R."/>
            <person name="da Cunha L.C."/>
            <person name="Naves L.M."/>
            <person name="Pedrino G.R."/>
            <person name="Costa E.A."/>
            <person name="Fajemiroye J.O."/>
        </authorList>
    </citation>
    <scope>FUNCTION AS ANXIOLYTIC EFFECTOR</scope>
</reference>
<reference key="12">
    <citation type="journal article" date="2020" name="NPJ Vaccines">
        <title>Novel mucosal adjuvant, mastoparan-7, improves cocaine vaccine efficacy.</title>
        <authorList>
            <person name="St John A.L."/>
            <person name="Choi H.W."/>
            <person name="Walker Q.D."/>
            <person name="Blough B."/>
            <person name="Kuhn C.M."/>
            <person name="Abraham S.N."/>
            <person name="Staats H.F."/>
        </authorList>
    </citation>
    <scope>BIOTECHNOLOGY</scope>
    <scope>MUTAGENESIS OF 12-LYS-ILE-13</scope>
</reference>
<reference key="13">
    <citation type="journal article" date="2020" name="Proc. Natl. Acad. Sci. U.S.A.">
        <title>Repurposing a peptide toxin from wasp venom into antiinfectives with dual antimicrobial and immunomodulatory properties.</title>
        <authorList>
            <person name="Silva O.N."/>
            <person name="Torres M.D.T."/>
            <person name="Cao J."/>
            <person name="Alves E.S.F."/>
            <person name="Rodrigues L.V."/>
            <person name="Resende J.M."/>
            <person name="Liao L.M."/>
            <person name="Porto W.F."/>
            <person name="Fensterseifer I.C.M."/>
            <person name="Lu T.K."/>
            <person name="Franco O.L."/>
            <person name="de la Fuente-Nunez C."/>
        </authorList>
    </citation>
    <scope>MUTAGENESIS OF ILE-1</scope>
</reference>
<reference key="14">
    <citation type="journal article" date="2021" name="Proc. Natl. Acad. Sci. U.S.A.">
        <authorList>
            <person name="Silva O.N."/>
            <person name="Torres M.D.T."/>
            <person name="Cao J."/>
            <person name="Alves E.S.F."/>
            <person name="Rodrigues L.V."/>
            <person name="Resende J.M."/>
            <person name="Liao L.M."/>
            <person name="Porto W.F."/>
            <person name="Fensterseifer I.C.M."/>
            <person name="Lu T.K."/>
            <person name="Franco O.L."/>
            <person name="de la Fuente-Nunez C."/>
        </authorList>
    </citation>
    <scope>ERRATUM OF PUBMED:33046640</scope>
</reference>
<reference key="15">
    <citation type="journal article" date="2022" name="Front. Mol. Biosci.">
        <title>Mastoparans: a group of multifunctional alpha-helical peptides with promising therapeutic properties.</title>
        <authorList>
            <person name="de Santana C.J.C."/>
            <person name="Pires Junior O.R."/>
            <person name="Fontes W."/>
            <person name="Palma M.S."/>
            <person name="Castro M.S."/>
        </authorList>
    </citation>
    <scope>REVIEW ON MASTOPARANS</scope>
</reference>
<reference key="16">
    <citation type="journal article" date="2001" name="Eur. J. Biochem.">
        <title>Interaction of mastoparan with membranes studied by 1H-NMR spectroscopy in detergent micelles and by solid-state 2H-NMR and 15N-NMR spectroscopy in oriented lipid bilayers.</title>
        <authorList>
            <person name="Hori Y."/>
            <person name="Demura M."/>
            <person name="Iwadate M."/>
            <person name="Ulrich A.S."/>
            <person name="Niidome T."/>
            <person name="Aoyagi H."/>
            <person name="Asakura T."/>
        </authorList>
    </citation>
    <scope>STRUCTURE BY NMR</scope>
    <scope>FUNCTION</scope>
</reference>
<proteinExistence type="evidence at protein level"/>
<accession>P01514</accession>
<name>MAST_VESLE</name>
<evidence type="ECO:0000269" key="1">
    <source>
    </source>
</evidence>
<evidence type="ECO:0000269" key="2">
    <source>
    </source>
</evidence>
<evidence type="ECO:0000269" key="3">
    <source>
    </source>
</evidence>
<evidence type="ECO:0000269" key="4">
    <source>
    </source>
</evidence>
<evidence type="ECO:0000269" key="5">
    <source>
    </source>
</evidence>
<evidence type="ECO:0000269" key="6">
    <source>
    </source>
</evidence>
<evidence type="ECO:0000269" key="7">
    <source>
    </source>
</evidence>
<evidence type="ECO:0000269" key="8">
    <source>
    </source>
</evidence>
<evidence type="ECO:0000269" key="9">
    <source>
    </source>
</evidence>
<evidence type="ECO:0000269" key="10">
    <source>
    </source>
</evidence>
<evidence type="ECO:0000269" key="11">
    <source>
    </source>
</evidence>
<evidence type="ECO:0000269" key="12">
    <source>
    </source>
</evidence>
<evidence type="ECO:0000269" key="13">
    <source>
    </source>
</evidence>
<evidence type="ECO:0000269" key="14">
    <source>
    </source>
</evidence>
<evidence type="ECO:0000303" key="15">
    <source>
    </source>
</evidence>
<evidence type="ECO:0000303" key="16">
    <source>
    </source>
</evidence>
<evidence type="ECO:0000303" key="17">
    <source>
    </source>
</evidence>
<evidence type="ECO:0000303" key="18">
    <source>
    </source>
</evidence>
<evidence type="ECO:0000305" key="19"/>
<evidence type="ECO:0000305" key="20">
    <source>
    </source>
</evidence>
<evidence type="ECO:0000305" key="21">
    <source>
    </source>
</evidence>
<evidence type="ECO:0000305" key="22">
    <source>
    </source>
</evidence>
<evidence type="ECO:0007829" key="23">
    <source>
        <dbReference type="PDB" id="1D7N"/>
    </source>
</evidence>
<feature type="peptide" id="PRO_0000044060" description="Mastoparan-L" evidence="12">
    <location>
        <begin position="1"/>
        <end position="14"/>
    </location>
</feature>
<feature type="modified residue" description="Leucine amide" evidence="12">
    <location>
        <position position="14"/>
    </location>
</feature>
<feature type="mutagenesis site" description="In Mas-MO; increase in antimicrobial activity, increase in immunomodulatory activity, and decrease in cytotoxicity (against all cells tested, except against HEK293 cells)." evidence="11">
    <original>I</original>
    <variation>FLPIII</variation>
    <location>
        <position position="1"/>
    </location>
</feature>
<feature type="mutagenesis site" description="Important decrease in mast cell degranulating activity and no change in antimicrobial activity (S.aureus)." evidence="7">
    <original>L</original>
    <variation>I</variation>
    <location>
        <position position="6"/>
    </location>
</feature>
<feature type="mutagenesis site" description="Loss of antimicrobial and mast cell degranulating activities. Mastoparan-17; loss of antimicrobial and mast cell degranulating activity; when associated with Leu-13." evidence="3 7">
    <original>L</original>
    <variation>K</variation>
    <location>
        <position position="6"/>
    </location>
</feature>
<feature type="mutagenesis site" description="Moderate decrease in mast cell degranulating activity, and no change in antimicrobial activity." evidence="7">
    <original>L</original>
    <variation>W</variation>
    <location>
        <position position="6"/>
    </location>
</feature>
<feature type="mutagenesis site" description="In Mas7; important increase in ability to activate G-protein coupled receptor. Can be used as a mucosal adjuvant to produce an anti-cocaine vaccine." evidence="3 9">
    <original>KI</original>
    <variation>AL</variation>
    <location>
        <begin position="12"/>
        <end position="13"/>
    </location>
</feature>
<feature type="mutagenesis site" description="No change in antimicrobial and mast cell degranulating activities. Mastoparan-17; loss of antimicrobial and mast cell degranulating activity; when associated with Lys-6." evidence="3 7">
    <original>I</original>
    <variation>L</variation>
    <location>
        <position position="13"/>
    </location>
</feature>
<feature type="helix" evidence="23">
    <location>
        <begin position="4"/>
        <end position="11"/>
    </location>
</feature>
<sequence>INLKALAALAKKIL</sequence>
<keyword id="KW-0002">3D-structure</keyword>
<keyword id="KW-0027">Amidation</keyword>
<keyword id="KW-0044">Antibiotic</keyword>
<keyword id="KW-0929">Antimicrobial</keyword>
<keyword id="KW-0204">Cytolysis</keyword>
<keyword id="KW-0903">Direct protein sequencing</keyword>
<keyword id="KW-0295">Fungicide</keyword>
<keyword id="KW-1213">G-protein coupled receptor impairing toxin</keyword>
<keyword id="KW-0391">Immunity</keyword>
<keyword id="KW-0399">Innate immunity</keyword>
<keyword id="KW-0467">Mast cell degranulation</keyword>
<keyword id="KW-0472">Membrane</keyword>
<keyword id="KW-0964">Secreted</keyword>
<keyword id="KW-1052">Target cell membrane</keyword>
<keyword id="KW-1053">Target membrane</keyword>
<keyword id="KW-0800">Toxin</keyword>
<protein>
    <recommendedName>
        <fullName evidence="18">Mastoparan-L</fullName>
        <shortName evidence="15">MP-L</shortName>
        <shortName evidence="16 17">Mast-L</shortName>
    </recommendedName>
</protein>
<comment type="function">
    <text evidence="1 2 3 4 6 7 8 10 11 12 13 14">Antimicrobial and mast cell degranulating peptide that interacts with lipid bilayers and activates G-protein coupled receptors (PubMed:2117607, PubMed:30613778, PubMed:3129426). Shows antimicrobial activity against some Gram-positive bacteria (S.aureus MIC=5 uM), Gram-negative bacteria (E.coli (MIC=50 uM), S.enterica), and fungi (B.cinerea (MIC=8 uM), C.albicans (MIC=25 uM), C.albicans, C.glabrata, and C.neoformans) (PubMed:21184791, PubMed:27104500). Does not show antimicrobial activity against Gram-positive S.mutans (PubMed:27104500). Shows cytolytic activity against insect cell lines, as well as cytotoxicity against murine fibroblasts (L929), murine macrophages monocytes (RAW 264.7), and human embryonic kidney (HEK293) cells (PubMed:21184791, PubMed:33046640). Also has mast cell degranulation activity (PubMed:30613778, PubMed:540362). It functions by activating connective tissue mast cells via the MRGPRX2 G-protein coupled receptors (PubMed:30613778). Also stimulates nucleoside diphosphate kinases (NDPK) in many cell types, and indirectly stimulates G-protein coupled receptors through interaction with NDPK (PubMed:1338595, PubMed:7998971, PubMed:8573186). Also shows hemolytic activity against human erythrocytes (PubMed:21184791, PubMed:33046640). Interacts with membranes and may be able to switch from an in-plane to a transmembrane orientation in lipid bilayers (PubMed:11168364). Has anxiolytic properties that can be explained by its ability to stimulate monoamine exocytosis and reduce plasma corticosterone (PubMed:3129426, PubMed:32059939). In docking studies, it also shows high affinity for GABA(A), 5-HT1A (HTR1A), corticotropin-releasing factor receptor subtype 1 (CRHR1) and glucocorticoid receptors (NR3C1), suggesting the involvement of GABAergic, serotonergic and glucocorticoid mechanisms in its anxiolytic-like properties (PubMed:32059939). In vivo, when tested on a mouse dermonecrotic S.aureus infection model, topical treatment with this peptide enhances clearance of S.aureus and accelerates healing of dermonecrotic lesions (PubMed:30613778). In vivo, oral and intracerebroventricular administration into mice induces anxiolytic-like effects (PubMed:32059939). In vivo, peptide injection in the vicinity of the head and thorax of lepidopteran larvae induces feeding disorder followed by death due to starvation (PubMed:21184791).</text>
</comment>
<comment type="subcellular location">
    <subcellularLocation>
        <location evidence="12">Secreted</location>
    </subcellularLocation>
    <subcellularLocation>
        <location evidence="19">Target cell membrane</location>
    </subcellularLocation>
    <text evidence="11 20 21">Assumes an amphipathic alpha-helical conformation in a membrane-like environment.</text>
</comment>
<comment type="tissue specificity">
    <text evidence="22">Expressed by the venom gland.</text>
</comment>
<comment type="biotechnology">
    <text evidence="5 9">The potent mast cell activator mastoparan-7 (abbreviated Mas7 or M7, which contains Ala at position 12 (K12A) and an Ile at position 13 (L13I)) can be used as a mucosal adjuvant to produce an anti-cocaine vaccine to induce an immune response that could attenuate the effects of cocaine consumption in humans (PubMed:32047657). In mice, this preparation induces the production of high-quality neutralizing antibodies, reduces cocaine penetration of the blood-brain barrier and protects mice from its psychoactive effects (PubMed:32047657). It is noteworthy that this derivative is also effective in inactivating several enveloped viruses, presenting reduction of the viral titers higher than 99% in several families as vesicular stomatitis virus (VSV) (Rhabdoviridae), West Nile virus strain NY99 (Flaviviridae), and Herpes simplex virus 1 (Herpesviridae), but does not show the activity on adenovirus (PubMed:23891650). In addition, this derivative acts directly on the VSV virions promoting their rupture (PubMed:23891650).</text>
</comment>
<comment type="miscellaneous">
    <text evidence="11">Mast-MO, a derivative peptide with an extended N-terminus (the FLPII motif is N-terminally added) has antimicrobial and immunomodulatory properties (PubMed:33046640). It exhibits increased antibacterial properties comparable to standard-of-care antibiotics both in vitro and in vivo, and potentiates the activity of different classes of antibiotics (PubMed:33046640). This derivative targets bacteria, and rapidly permeabilizes their outer membrane (PubMed:33046640). In vivo, it displays direct antimicrobial activity, leads to enhance ability to attract leukocytes to the infection site, and is able to control inflammation (PubMed:33046640).</text>
</comment>
<comment type="similarity">
    <text evidence="19">Belongs to the MCD family. Mastoparan subfamily.</text>
</comment>
<organism>
    <name type="scientific">Vespula lewisii</name>
    <name type="common">Korean yellow-jacket wasp</name>
    <name type="synonym">Vespula flaviceps lewisii</name>
    <dbReference type="NCBI Taxonomy" id="7452"/>
    <lineage>
        <taxon>Eukaryota</taxon>
        <taxon>Metazoa</taxon>
        <taxon>Ecdysozoa</taxon>
        <taxon>Arthropoda</taxon>
        <taxon>Hexapoda</taxon>
        <taxon>Insecta</taxon>
        <taxon>Pterygota</taxon>
        <taxon>Neoptera</taxon>
        <taxon>Endopterygota</taxon>
        <taxon>Hymenoptera</taxon>
        <taxon>Apocrita</taxon>
        <taxon>Aculeata</taxon>
        <taxon>Vespoidea</taxon>
        <taxon>Vespidae</taxon>
        <taxon>Vespinae</taxon>
        <taxon>Vespula</taxon>
    </lineage>
</organism>